<gene>
    <name evidence="1" type="primary">rpsD</name>
    <name type="ordered locus">BB_0615</name>
</gene>
<organism>
    <name type="scientific">Borreliella burgdorferi (strain ATCC 35210 / DSM 4680 / CIP 102532 / B31)</name>
    <name type="common">Borrelia burgdorferi</name>
    <dbReference type="NCBI Taxonomy" id="224326"/>
    <lineage>
        <taxon>Bacteria</taxon>
        <taxon>Pseudomonadati</taxon>
        <taxon>Spirochaetota</taxon>
        <taxon>Spirochaetia</taxon>
        <taxon>Spirochaetales</taxon>
        <taxon>Borreliaceae</taxon>
        <taxon>Borreliella</taxon>
    </lineage>
</organism>
<protein>
    <recommendedName>
        <fullName evidence="1">Small ribosomal subunit protein uS4</fullName>
    </recommendedName>
    <alternativeName>
        <fullName evidence="2">30S ribosomal protein S4</fullName>
    </alternativeName>
</protein>
<comment type="function">
    <text evidence="1">One of the primary rRNA binding proteins, it binds directly to 16S rRNA where it nucleates assembly of the body of the 30S subunit.</text>
</comment>
<comment type="function">
    <text evidence="1">With S5 and S12 plays an important role in translational accuracy.</text>
</comment>
<comment type="subunit">
    <text evidence="1">Part of the 30S ribosomal subunit. Contacts protein S5. The interaction surface between S4 and S5 is involved in control of translational fidelity.</text>
</comment>
<comment type="similarity">
    <text evidence="1">Belongs to the universal ribosomal protein uS4 family.</text>
</comment>
<sequence>MNRKQIAKGKLVRRFGINIFEQPKYDKILKKKPHPPGMHGKARKAKITEYGKQLIEKQKIKFTYGVSERQLTNTFKEAKKHHGVTGDNLLSILERRIDNVVYRAGFAISRAHARQIVSHGIIILNGRRVTIPSIILRANDQIQIKEKDSLKKLIRSNIEKTSSLRNLPTWIEVNADDLNIKVKHAPSRDEIPTLANEQMVVEYYSKRA</sequence>
<proteinExistence type="evidence at protein level"/>
<feature type="chain" id="PRO_0000132345" description="Small ribosomal subunit protein uS4">
    <location>
        <begin position="1"/>
        <end position="208"/>
    </location>
</feature>
<feature type="domain" description="S4 RNA-binding" evidence="1">
    <location>
        <begin position="95"/>
        <end position="157"/>
    </location>
</feature>
<evidence type="ECO:0000255" key="1">
    <source>
        <dbReference type="HAMAP-Rule" id="MF_01306"/>
    </source>
</evidence>
<evidence type="ECO:0000305" key="2"/>
<reference key="1">
    <citation type="journal article" date="1997" name="Nature">
        <title>Genomic sequence of a Lyme disease spirochaete, Borrelia burgdorferi.</title>
        <authorList>
            <person name="Fraser C.M."/>
            <person name="Casjens S."/>
            <person name="Huang W.M."/>
            <person name="Sutton G.G."/>
            <person name="Clayton R.A."/>
            <person name="Lathigra R."/>
            <person name="White O."/>
            <person name="Ketchum K.A."/>
            <person name="Dodson R.J."/>
            <person name="Hickey E.K."/>
            <person name="Gwinn M.L."/>
            <person name="Dougherty B.A."/>
            <person name="Tomb J.-F."/>
            <person name="Fleischmann R.D."/>
            <person name="Richardson D.L."/>
            <person name="Peterson J.D."/>
            <person name="Kerlavage A.R."/>
            <person name="Quackenbush J."/>
            <person name="Salzberg S.L."/>
            <person name="Hanson M."/>
            <person name="van Vugt R."/>
            <person name="Palmer N."/>
            <person name="Adams M.D."/>
            <person name="Gocayne J.D."/>
            <person name="Weidman J.F."/>
            <person name="Utterback T.R."/>
            <person name="Watthey L."/>
            <person name="McDonald L.A."/>
            <person name="Artiach P."/>
            <person name="Bowman C."/>
            <person name="Garland S.A."/>
            <person name="Fujii C."/>
            <person name="Cotton M.D."/>
            <person name="Horst K."/>
            <person name="Roberts K.M."/>
            <person name="Hatch B."/>
            <person name="Smith H.O."/>
            <person name="Venter J.C."/>
        </authorList>
    </citation>
    <scope>NUCLEOTIDE SEQUENCE [LARGE SCALE GENOMIC DNA]</scope>
    <source>
        <strain>ATCC 35210 / DSM 4680 / CIP 102532 / B31</strain>
    </source>
</reference>
<accession>O51560</accession>
<dbReference type="EMBL" id="AE000783">
    <property type="protein sequence ID" value="AAC66961.2"/>
    <property type="molecule type" value="Genomic_DNA"/>
</dbReference>
<dbReference type="PIR" id="F70176">
    <property type="entry name" value="F70176"/>
</dbReference>
<dbReference type="RefSeq" id="NP_212749.2">
    <property type="nucleotide sequence ID" value="NC_001318.1"/>
</dbReference>
<dbReference type="RefSeq" id="WP_002557202.1">
    <property type="nucleotide sequence ID" value="NC_001318.1"/>
</dbReference>
<dbReference type="PDB" id="8FMW">
    <property type="method" value="EM"/>
    <property type="resolution" value="2.86 A"/>
    <property type="chains" value="D=1-208"/>
</dbReference>
<dbReference type="PDBsum" id="8FMW"/>
<dbReference type="EMDB" id="EMD-29298"/>
<dbReference type="SMR" id="O51560"/>
<dbReference type="STRING" id="224326.BB_0615"/>
<dbReference type="PaxDb" id="224326-BB_0615"/>
<dbReference type="EnsemblBacteria" id="AAC66961">
    <property type="protein sequence ID" value="AAC66961"/>
    <property type="gene ID" value="BB_0615"/>
</dbReference>
<dbReference type="KEGG" id="bbu:BB_0615"/>
<dbReference type="PATRIC" id="fig|224326.49.peg.1005"/>
<dbReference type="HOGENOM" id="CLU_092403_0_4_12"/>
<dbReference type="OrthoDB" id="9803672at2"/>
<dbReference type="Proteomes" id="UP000001807">
    <property type="component" value="Chromosome"/>
</dbReference>
<dbReference type="GO" id="GO:0015935">
    <property type="term" value="C:small ribosomal subunit"/>
    <property type="evidence" value="ECO:0007669"/>
    <property type="project" value="InterPro"/>
</dbReference>
<dbReference type="GO" id="GO:0019843">
    <property type="term" value="F:rRNA binding"/>
    <property type="evidence" value="ECO:0007669"/>
    <property type="project" value="UniProtKB-UniRule"/>
</dbReference>
<dbReference type="GO" id="GO:0003735">
    <property type="term" value="F:structural constituent of ribosome"/>
    <property type="evidence" value="ECO:0007669"/>
    <property type="project" value="InterPro"/>
</dbReference>
<dbReference type="GO" id="GO:0042274">
    <property type="term" value="P:ribosomal small subunit biogenesis"/>
    <property type="evidence" value="ECO:0007669"/>
    <property type="project" value="TreeGrafter"/>
</dbReference>
<dbReference type="GO" id="GO:0006412">
    <property type="term" value="P:translation"/>
    <property type="evidence" value="ECO:0007669"/>
    <property type="project" value="UniProtKB-UniRule"/>
</dbReference>
<dbReference type="CDD" id="cd00165">
    <property type="entry name" value="S4"/>
    <property type="match status" value="1"/>
</dbReference>
<dbReference type="FunFam" id="3.10.290.10:FF:000001">
    <property type="entry name" value="30S ribosomal protein S4"/>
    <property type="match status" value="1"/>
</dbReference>
<dbReference type="Gene3D" id="1.10.1050.10">
    <property type="entry name" value="Ribosomal Protein S4 Delta 41, Chain A, domain 1"/>
    <property type="match status" value="1"/>
</dbReference>
<dbReference type="Gene3D" id="3.10.290.10">
    <property type="entry name" value="RNA-binding S4 domain"/>
    <property type="match status" value="1"/>
</dbReference>
<dbReference type="HAMAP" id="MF_01306_B">
    <property type="entry name" value="Ribosomal_uS4_B"/>
    <property type="match status" value="1"/>
</dbReference>
<dbReference type="InterPro" id="IPR022801">
    <property type="entry name" value="Ribosomal_uS4"/>
</dbReference>
<dbReference type="InterPro" id="IPR005709">
    <property type="entry name" value="Ribosomal_uS4_bac-type"/>
</dbReference>
<dbReference type="InterPro" id="IPR018079">
    <property type="entry name" value="Ribosomal_uS4_CS"/>
</dbReference>
<dbReference type="InterPro" id="IPR001912">
    <property type="entry name" value="Ribosomal_uS4_N"/>
</dbReference>
<dbReference type="InterPro" id="IPR002942">
    <property type="entry name" value="S4_RNA-bd"/>
</dbReference>
<dbReference type="InterPro" id="IPR036986">
    <property type="entry name" value="S4_RNA-bd_sf"/>
</dbReference>
<dbReference type="NCBIfam" id="NF003717">
    <property type="entry name" value="PRK05327.1"/>
    <property type="match status" value="1"/>
</dbReference>
<dbReference type="NCBIfam" id="TIGR01017">
    <property type="entry name" value="rpsD_bact"/>
    <property type="match status" value="1"/>
</dbReference>
<dbReference type="PANTHER" id="PTHR11831">
    <property type="entry name" value="30S 40S RIBOSOMAL PROTEIN"/>
    <property type="match status" value="1"/>
</dbReference>
<dbReference type="PANTHER" id="PTHR11831:SF4">
    <property type="entry name" value="SMALL RIBOSOMAL SUBUNIT PROTEIN US4M"/>
    <property type="match status" value="1"/>
</dbReference>
<dbReference type="Pfam" id="PF00163">
    <property type="entry name" value="Ribosomal_S4"/>
    <property type="match status" value="1"/>
</dbReference>
<dbReference type="Pfam" id="PF01479">
    <property type="entry name" value="S4"/>
    <property type="match status" value="1"/>
</dbReference>
<dbReference type="SMART" id="SM01390">
    <property type="entry name" value="Ribosomal_S4"/>
    <property type="match status" value="1"/>
</dbReference>
<dbReference type="SMART" id="SM00363">
    <property type="entry name" value="S4"/>
    <property type="match status" value="1"/>
</dbReference>
<dbReference type="SUPFAM" id="SSF55174">
    <property type="entry name" value="Alpha-L RNA-binding motif"/>
    <property type="match status" value="1"/>
</dbReference>
<dbReference type="PROSITE" id="PS00632">
    <property type="entry name" value="RIBOSOMAL_S4"/>
    <property type="match status" value="1"/>
</dbReference>
<dbReference type="PROSITE" id="PS50889">
    <property type="entry name" value="S4"/>
    <property type="match status" value="1"/>
</dbReference>
<keyword id="KW-0002">3D-structure</keyword>
<keyword id="KW-1185">Reference proteome</keyword>
<keyword id="KW-0687">Ribonucleoprotein</keyword>
<keyword id="KW-0689">Ribosomal protein</keyword>
<keyword id="KW-0694">RNA-binding</keyword>
<keyword id="KW-0699">rRNA-binding</keyword>
<name>RS4_BORBU</name>